<proteinExistence type="evidence at protein level"/>
<dbReference type="EMBL" id="M16194">
    <property type="status" value="NOT_ANNOTATED_CDS"/>
    <property type="molecule type" value="Genomic_DNA"/>
</dbReference>
<dbReference type="EMBL" id="U28379">
    <property type="protein sequence ID" value="AAA89143.1"/>
    <property type="molecule type" value="Genomic_DNA"/>
</dbReference>
<dbReference type="EMBL" id="U00096">
    <property type="protein sequence ID" value="AAC76099.1"/>
    <property type="molecule type" value="Genomic_DNA"/>
</dbReference>
<dbReference type="EMBL" id="AP009048">
    <property type="protein sequence ID" value="BAE77114.1"/>
    <property type="molecule type" value="Genomic_DNA"/>
</dbReference>
<dbReference type="PIR" id="E65094">
    <property type="entry name" value="QQECRS"/>
</dbReference>
<dbReference type="RefSeq" id="NP_417535.1">
    <property type="nucleotide sequence ID" value="NC_000913.3"/>
</dbReference>
<dbReference type="RefSeq" id="WP_000804973.1">
    <property type="nucleotide sequence ID" value="NZ_LN832404.1"/>
</dbReference>
<dbReference type="SMR" id="P39414"/>
<dbReference type="BioGRID" id="4262386">
    <property type="interactions" value="10"/>
</dbReference>
<dbReference type="FunCoup" id="P39414">
    <property type="interactions" value="265"/>
</dbReference>
<dbReference type="STRING" id="511145.b3063"/>
<dbReference type="TCDB" id="2.A.47.3.3">
    <property type="family name" value="the divalent anion:na(+) symporter (dass) family"/>
</dbReference>
<dbReference type="PaxDb" id="511145-b3063"/>
<dbReference type="EnsemblBacteria" id="AAC76099">
    <property type="protein sequence ID" value="AAC76099"/>
    <property type="gene ID" value="b3063"/>
</dbReference>
<dbReference type="GeneID" id="947576"/>
<dbReference type="KEGG" id="ecj:JW3035"/>
<dbReference type="KEGG" id="eco:b3063"/>
<dbReference type="KEGG" id="ecoc:C3026_16735"/>
<dbReference type="PATRIC" id="fig|511145.12.peg.3157"/>
<dbReference type="EchoBASE" id="EB2294"/>
<dbReference type="eggNOG" id="COG0471">
    <property type="taxonomic scope" value="Bacteria"/>
</dbReference>
<dbReference type="HOGENOM" id="CLU_005170_7_0_6"/>
<dbReference type="InParanoid" id="P39414"/>
<dbReference type="OMA" id="YAWHFFA"/>
<dbReference type="OrthoDB" id="3170849at2"/>
<dbReference type="PhylomeDB" id="P39414"/>
<dbReference type="BioCyc" id="EcoCyc:YGJE-MONOMER"/>
<dbReference type="BioCyc" id="MetaCyc:YGJE-MONOMER"/>
<dbReference type="SABIO-RK" id="P39414"/>
<dbReference type="PRO" id="PR:P39414"/>
<dbReference type="Proteomes" id="UP000000625">
    <property type="component" value="Chromosome"/>
</dbReference>
<dbReference type="GO" id="GO:0005886">
    <property type="term" value="C:plasma membrane"/>
    <property type="evidence" value="ECO:0000314"/>
    <property type="project" value="EcoCyc"/>
</dbReference>
<dbReference type="GO" id="GO:0015516">
    <property type="term" value="F:tartrate:succinate antiporter activity"/>
    <property type="evidence" value="ECO:0000314"/>
    <property type="project" value="EcoCyc"/>
</dbReference>
<dbReference type="GO" id="GO:0015745">
    <property type="term" value="P:tartrate transmembrane transport"/>
    <property type="evidence" value="ECO:0000314"/>
    <property type="project" value="EcoCyc"/>
</dbReference>
<dbReference type="InterPro" id="IPR030676">
    <property type="entry name" value="CitT-rel"/>
</dbReference>
<dbReference type="InterPro" id="IPR001898">
    <property type="entry name" value="SLC13A/DASS"/>
</dbReference>
<dbReference type="NCBIfam" id="TIGR00785">
    <property type="entry name" value="dass"/>
    <property type="match status" value="1"/>
</dbReference>
<dbReference type="PANTHER" id="PTHR42826">
    <property type="entry name" value="DICARBOXYLATE TRANSPORTER 2.1, CHLOROPLASTIC"/>
    <property type="match status" value="1"/>
</dbReference>
<dbReference type="Pfam" id="PF00939">
    <property type="entry name" value="Na_sulph_symp"/>
    <property type="match status" value="1"/>
</dbReference>
<dbReference type="PIRSF" id="PIRSF002457">
    <property type="entry name" value="DASS"/>
    <property type="match status" value="1"/>
</dbReference>
<accession>P39414</accession>
<accession>Q2M9E2</accession>
<accession>Q46870</accession>
<organism>
    <name type="scientific">Escherichia coli (strain K12)</name>
    <dbReference type="NCBI Taxonomy" id="83333"/>
    <lineage>
        <taxon>Bacteria</taxon>
        <taxon>Pseudomonadati</taxon>
        <taxon>Pseudomonadota</taxon>
        <taxon>Gammaproteobacteria</taxon>
        <taxon>Enterobacterales</taxon>
        <taxon>Enterobacteriaceae</taxon>
        <taxon>Escherichia</taxon>
    </lineage>
</organism>
<gene>
    <name evidence="5" type="primary">ttdT</name>
    <name type="synonym">ygjC</name>
    <name type="synonym">ygjE</name>
    <name type="ordered locus">b3063</name>
    <name type="ordered locus">JW3035</name>
</gene>
<reference key="1">
    <citation type="journal article" date="1987" name="Gene">
        <title>Possible new genes as revealed by molecular analysis of a 5-kb Escherichia coli chromosomal region 5' to the rpsU-dnaG-rpoD macromolecular-synthesis operon.</title>
        <authorList>
            <person name="Nesin M."/>
            <person name="Lupski J.R."/>
            <person name="Svec P."/>
            <person name="Godson G.N."/>
        </authorList>
    </citation>
    <scope>NUCLEOTIDE SEQUENCE [GENOMIC DNA]</scope>
</reference>
<reference key="2">
    <citation type="journal article" date="1997" name="Science">
        <title>The complete genome sequence of Escherichia coli K-12.</title>
        <authorList>
            <person name="Blattner F.R."/>
            <person name="Plunkett G. III"/>
            <person name="Bloch C.A."/>
            <person name="Perna N.T."/>
            <person name="Burland V."/>
            <person name="Riley M."/>
            <person name="Collado-Vides J."/>
            <person name="Glasner J.D."/>
            <person name="Rode C.K."/>
            <person name="Mayhew G.F."/>
            <person name="Gregor J."/>
            <person name="Davis N.W."/>
            <person name="Kirkpatrick H.A."/>
            <person name="Goeden M.A."/>
            <person name="Rose D.J."/>
            <person name="Mau B."/>
            <person name="Shao Y."/>
        </authorList>
    </citation>
    <scope>NUCLEOTIDE SEQUENCE [LARGE SCALE GENOMIC DNA]</scope>
    <source>
        <strain>K12 / MG1655 / ATCC 47076</strain>
    </source>
</reference>
<reference key="3">
    <citation type="journal article" date="2006" name="Mol. Syst. Biol.">
        <title>Highly accurate genome sequences of Escherichia coli K-12 strains MG1655 and W3110.</title>
        <authorList>
            <person name="Hayashi K."/>
            <person name="Morooka N."/>
            <person name="Yamamoto Y."/>
            <person name="Fujita K."/>
            <person name="Isono K."/>
            <person name="Choi S."/>
            <person name="Ohtsubo E."/>
            <person name="Baba T."/>
            <person name="Wanner B.L."/>
            <person name="Mori H."/>
            <person name="Horiuchi T."/>
        </authorList>
    </citation>
    <scope>NUCLEOTIDE SEQUENCE [LARGE SCALE GENOMIC DNA]</scope>
    <source>
        <strain>K12 / W3110 / ATCC 27325 / DSM 5911</strain>
    </source>
</reference>
<reference key="4">
    <citation type="journal article" date="1994" name="Nucleic Acids Res.">
        <title>Intrinsic and extrinsic approaches for detecting genes in a bacterial genome.</title>
        <authorList>
            <person name="Borodovsky M."/>
            <person name="Rudd K.E."/>
            <person name="Koonin E.V."/>
        </authorList>
    </citation>
    <scope>IDENTIFICATION</scope>
</reference>
<reference key="5">
    <citation type="journal article" date="1998" name="J. Bacteriol.">
        <title>The Escherichia coli citrate carrier CitT: a member of a novel eubacterial transporter family related to the 2-oxoglutarate/malate translocator from spinach chloroplasts.</title>
        <authorList>
            <person name="Pos K.M."/>
            <person name="Dimroth P."/>
            <person name="Bott M."/>
        </authorList>
    </citation>
    <scope>POSSIBLE FUNCTION</scope>
</reference>
<reference key="6">
    <citation type="journal article" date="2005" name="Science">
        <title>Global topology analysis of the Escherichia coli inner membrane proteome.</title>
        <authorList>
            <person name="Daley D.O."/>
            <person name="Rapp M."/>
            <person name="Granseth E."/>
            <person name="Melen K."/>
            <person name="Drew D."/>
            <person name="von Heijne G."/>
        </authorList>
    </citation>
    <scope>TOPOLOGY [LARGE SCALE ANALYSIS]</scope>
    <scope>SUBCELLULAR LOCATION</scope>
    <source>
        <strain>K12 / MG1655 / ATCC 47076</strain>
    </source>
</reference>
<reference key="7">
    <citation type="journal article" date="2006" name="Microbiology">
        <title>Functional identification of ygiP as a positive regulator of the ttdA-ttdB-ygjE operon.</title>
        <authorList>
            <person name="Oshima T."/>
            <person name="Biville F."/>
        </authorList>
    </citation>
    <scope>INDUCTION</scope>
</reference>
<reference key="8">
    <citation type="journal article" date="2007" name="J. Bacteriol.">
        <title>The L-tartrate/succinate antiporter TtdT (YgjE) of L-tartrate fermentation in Escherichia coli.</title>
        <authorList>
            <person name="Kim O.B."/>
            <person name="Unden G."/>
        </authorList>
    </citation>
    <scope>FUNCTION</scope>
    <scope>TRANSPORTER ACTIVITY</scope>
    <scope>BIOPHYSICOCHEMICAL PROPERTIES</scope>
    <scope>DISRUPTION PHENOTYPE</scope>
    <source>
        <strain>K12 / MG1655 / ATCC 47076</strain>
    </source>
</reference>
<comment type="function">
    <text evidence="4">Catalyzes the uptake of tartrate in exchange for intracellular succinate. Essential for anaerobic L-tartrate fermentation.</text>
</comment>
<comment type="catalytic activity">
    <reaction evidence="4">
        <text>(2R,3R)-tartrate(out) + succinate(in) = (2R,3R)-tartrate(in) + succinate(out)</text>
        <dbReference type="Rhea" id="RHEA:29259"/>
        <dbReference type="ChEBI" id="CHEBI:30031"/>
        <dbReference type="ChEBI" id="CHEBI:30924"/>
    </reaction>
    <physiologicalReaction direction="left-to-right" evidence="4">
        <dbReference type="Rhea" id="RHEA:29260"/>
    </physiologicalReaction>
</comment>
<comment type="biophysicochemical properties">
    <kinetics>
        <KM evidence="4">700 uM for tartrate</KM>
        <KM evidence="4">400 uM for succinate</KM>
        <Vmax evidence="4">110.0 umol/min/g enzyme for tartrate import</Vmax>
        <Vmax evidence="4">16.0 umol/min/g enzyme for succinate export</Vmax>
    </kinetics>
</comment>
<comment type="subcellular location">
    <subcellularLocation>
        <location evidence="2">Cell inner membrane</location>
        <topology evidence="1">Multi-pass membrane protein</topology>
    </subcellularLocation>
</comment>
<comment type="induction">
    <text evidence="3">Induced by tartrate, via TtdR.</text>
</comment>
<comment type="disruption phenotype">
    <text evidence="4">Deletion of the gene abolishes growth by L-tartrate fermentation.</text>
</comment>
<comment type="similarity">
    <text evidence="6">Belongs to the SLC13A/DASS transporter (TC 2.A.47) family. DIT1 subfamily.</text>
</comment>
<comment type="sequence caution" evidence="6">
    <conflict type="frameshift">
        <sequence resource="EMBL" id="M16194"/>
    </conflict>
</comment>
<evidence type="ECO:0000255" key="1"/>
<evidence type="ECO:0000269" key="2">
    <source>
    </source>
</evidence>
<evidence type="ECO:0000269" key="3">
    <source>
    </source>
</evidence>
<evidence type="ECO:0000269" key="4">
    <source>
    </source>
</evidence>
<evidence type="ECO:0000303" key="5">
    <source>
    </source>
</evidence>
<evidence type="ECO:0000305" key="6"/>
<sequence>MKPSTEWWRYLAPLAVIAIIALLPVPAGLENHTWLYFAVFTGVIVGLILEPVPGAVVAMVGISIIAILSPWLLFSPEQLAQPGFKFTAKSLSWAVSGFSNSVIWLIFAAFMFGTGYEKTGLGRRIALILVKKMGHRTLFLGYAVMFSELILAPVTPSNSARGAGIIYPIIRNLPPLYQSQPNDSSSRSIGSYIMWMGIVADCVTSAIFLTAMAPNLLLIGLMKSASHATLSWGDWFLGMLPLSILLVLLVPWLAYVLYPPVLKSGDQVPRWAETELQAMGPLCSREKRMLGLMVGALVLWIFGGDYIDAAMVGYSVVALMLLLRIISWDDIVSNKAAWNVFFWLASLITLATGLNNTGFISWFGKLLAGSLSGYSPTMVMVALIVVFYLLRYFFASATAYTSALAPMMIAAALAMPEIPLPVFCLMVGAAIGLGSILTPYATGPSPIYYGSGYLPTADYWRLGAIFGLIFLVLLVITGLLWMPVVLL</sequence>
<protein>
    <recommendedName>
        <fullName evidence="5">L-tartrate/succinate antiporter</fullName>
    </recommendedName>
    <alternativeName>
        <fullName>Tartrate carrier</fullName>
    </alternativeName>
    <alternativeName>
        <fullName>Tartrate transporter</fullName>
    </alternativeName>
</protein>
<feature type="chain" id="PRO_0000172525" description="L-tartrate/succinate antiporter">
    <location>
        <begin position="1"/>
        <end position="487"/>
    </location>
</feature>
<feature type="topological domain" description="Periplasmic" evidence="6">
    <location>
        <begin position="1"/>
        <end position="9"/>
    </location>
</feature>
<feature type="transmembrane region" description="Helical" evidence="1">
    <location>
        <begin position="10"/>
        <end position="30"/>
    </location>
</feature>
<feature type="topological domain" description="Cytoplasmic" evidence="6">
    <location>
        <begin position="31"/>
        <end position="32"/>
    </location>
</feature>
<feature type="transmembrane region" description="Helical" evidence="1">
    <location>
        <begin position="33"/>
        <end position="53"/>
    </location>
</feature>
<feature type="transmembrane region" description="Helical" evidence="1">
    <location>
        <begin position="54"/>
        <end position="74"/>
    </location>
</feature>
<feature type="topological domain" description="Cytoplasmic" evidence="6">
    <location>
        <begin position="75"/>
        <end position="92"/>
    </location>
</feature>
<feature type="transmembrane region" description="Helical" evidence="1">
    <location>
        <begin position="93"/>
        <end position="113"/>
    </location>
</feature>
<feature type="topological domain" description="Periplasmic" evidence="6">
    <location>
        <begin position="114"/>
        <end position="136"/>
    </location>
</feature>
<feature type="transmembrane region" description="Helical" evidence="1">
    <location>
        <begin position="137"/>
        <end position="157"/>
    </location>
</feature>
<feature type="topological domain" description="Cytoplasmic" evidence="6">
    <location>
        <begin position="158"/>
        <end position="188"/>
    </location>
</feature>
<feature type="transmembrane region" description="Helical" evidence="1">
    <location>
        <begin position="189"/>
        <end position="209"/>
    </location>
</feature>
<feature type="topological domain" description="Periplasmic" evidence="6">
    <location>
        <begin position="210"/>
        <end position="235"/>
    </location>
</feature>
<feature type="transmembrane region" description="Helical" evidence="1">
    <location>
        <begin position="236"/>
        <end position="256"/>
    </location>
</feature>
<feature type="topological domain" description="Cytoplasmic" evidence="6">
    <location>
        <begin position="257"/>
        <end position="291"/>
    </location>
</feature>
<feature type="transmembrane region" description="Helical" evidence="1">
    <location>
        <begin position="292"/>
        <end position="312"/>
    </location>
</feature>
<feature type="transmembrane region" description="Helical" evidence="1">
    <location>
        <begin position="313"/>
        <end position="333"/>
    </location>
</feature>
<feature type="topological domain" description="Cytoplasmic" evidence="6">
    <location>
        <begin position="334"/>
        <end position="339"/>
    </location>
</feature>
<feature type="transmembrane region" description="Helical" evidence="1">
    <location>
        <begin position="340"/>
        <end position="360"/>
    </location>
</feature>
<feature type="topological domain" description="Periplasmic" evidence="6">
    <location>
        <begin position="361"/>
        <end position="369"/>
    </location>
</feature>
<feature type="transmembrane region" description="Helical" evidence="1">
    <location>
        <begin position="370"/>
        <end position="390"/>
    </location>
</feature>
<feature type="topological domain" description="Cytoplasmic" evidence="6">
    <location>
        <begin position="391"/>
        <end position="392"/>
    </location>
</feature>
<feature type="transmembrane region" description="Helical" evidence="1">
    <location>
        <begin position="393"/>
        <end position="413"/>
    </location>
</feature>
<feature type="topological domain" description="Periplasmic" evidence="6">
    <location>
        <begin position="414"/>
        <end position="417"/>
    </location>
</feature>
<feature type="transmembrane region" description="Helical" evidence="1">
    <location>
        <begin position="418"/>
        <end position="438"/>
    </location>
</feature>
<feature type="topological domain" description="Cytoplasmic" evidence="6">
    <location>
        <begin position="439"/>
        <end position="464"/>
    </location>
</feature>
<feature type="transmembrane region" description="Helical" evidence="1">
    <location>
        <begin position="465"/>
        <end position="485"/>
    </location>
</feature>
<feature type="topological domain" description="Periplasmic" evidence="2">
    <location>
        <begin position="486"/>
        <end position="487"/>
    </location>
</feature>
<feature type="sequence conflict" description="In Ref. 1." evidence="6" ref="1">
    <original>L</original>
    <variation>P</variation>
    <location>
        <position position="404"/>
    </location>
</feature>
<feature type="sequence conflict" description="In Ref. 1." evidence="6" ref="1">
    <original>A</original>
    <variation>T</variation>
    <location>
        <position position="457"/>
    </location>
</feature>
<keyword id="KW-0050">Antiport</keyword>
<keyword id="KW-0997">Cell inner membrane</keyword>
<keyword id="KW-1003">Cell membrane</keyword>
<keyword id="KW-0472">Membrane</keyword>
<keyword id="KW-1185">Reference proteome</keyword>
<keyword id="KW-0812">Transmembrane</keyword>
<keyword id="KW-1133">Transmembrane helix</keyword>
<keyword id="KW-0813">Transport</keyword>
<name>TTDT_ECOLI</name>